<comment type="function">
    <text evidence="2">Cell wall formation.</text>
</comment>
<comment type="catalytic activity">
    <reaction evidence="2">
        <text>2 D-alanine + ATP = D-alanyl-D-alanine + ADP + phosphate + H(+)</text>
        <dbReference type="Rhea" id="RHEA:11224"/>
        <dbReference type="ChEBI" id="CHEBI:15378"/>
        <dbReference type="ChEBI" id="CHEBI:30616"/>
        <dbReference type="ChEBI" id="CHEBI:43474"/>
        <dbReference type="ChEBI" id="CHEBI:57416"/>
        <dbReference type="ChEBI" id="CHEBI:57822"/>
        <dbReference type="ChEBI" id="CHEBI:456216"/>
        <dbReference type="EC" id="6.3.2.4"/>
    </reaction>
</comment>
<comment type="cofactor">
    <cofactor evidence="1">
        <name>Mg(2+)</name>
        <dbReference type="ChEBI" id="CHEBI:18420"/>
    </cofactor>
    <cofactor evidence="1">
        <name>Mn(2+)</name>
        <dbReference type="ChEBI" id="CHEBI:29035"/>
    </cofactor>
    <text evidence="1">Binds 2 magnesium or manganese ions per subunit.</text>
</comment>
<comment type="pathway">
    <text evidence="2">Cell wall biogenesis; peptidoglycan biosynthesis.</text>
</comment>
<comment type="subcellular location">
    <subcellularLocation>
        <location evidence="2">Cytoplasm</location>
    </subcellularLocation>
</comment>
<comment type="similarity">
    <text evidence="2">Belongs to the D-alanine--D-alanine ligase family.</text>
</comment>
<sequence length="357" mass="40375">MTKENICIVFGGKSAEHDVSILTAQNVLNAIDKERYQVDIIYITNDGEWKKKDNITQEIKNTDELVINDVETGEISQLLSKGSLGKSYDAVFPLLHGPNGEDGTIQGLFEVLDIPYVGNGVLAASSSMDKLVMKQLFEHRGLPQLPYISFLRSEYEKYENNIIKLVNDKLTYPVFVKPANLGSSVGISKCNNEEELKSGIAEAFQFDRKLVIEQGINAREIEVAVLGNDYPETTWPGEVVKDVAFYDYKSKYKDGKIRLDIPADLDQDVQMTLRNMALEAFKATDCSGLVRADFFVTDDNQIYINETNAMPGFTAYSMYPNLWKNMGLSYPDLIAKLIDLAKERYEDKKKNKYKIDY</sequence>
<proteinExistence type="inferred from homology"/>
<evidence type="ECO:0000250" key="1"/>
<evidence type="ECO:0000255" key="2">
    <source>
        <dbReference type="HAMAP-Rule" id="MF_00047"/>
    </source>
</evidence>
<reference key="1">
    <citation type="journal article" date="2005" name="J. Bacteriol.">
        <title>Insights on evolution of virulence and resistance from the complete genome analysis of an early methicillin-resistant Staphylococcus aureus strain and a biofilm-producing methicillin-resistant Staphylococcus epidermidis strain.</title>
        <authorList>
            <person name="Gill S.R."/>
            <person name="Fouts D.E."/>
            <person name="Archer G.L."/>
            <person name="Mongodin E.F."/>
            <person name="DeBoy R.T."/>
            <person name="Ravel J."/>
            <person name="Paulsen I.T."/>
            <person name="Kolonay J.F."/>
            <person name="Brinkac L.M."/>
            <person name="Beanan M.J."/>
            <person name="Dodson R.J."/>
            <person name="Daugherty S.C."/>
            <person name="Madupu R."/>
            <person name="Angiuoli S.V."/>
            <person name="Durkin A.S."/>
            <person name="Haft D.H."/>
            <person name="Vamathevan J.J."/>
            <person name="Khouri H."/>
            <person name="Utterback T.R."/>
            <person name="Lee C."/>
            <person name="Dimitrov G."/>
            <person name="Jiang L."/>
            <person name="Qin H."/>
            <person name="Weidman J."/>
            <person name="Tran K."/>
            <person name="Kang K.H."/>
            <person name="Hance I.R."/>
            <person name="Nelson K.E."/>
            <person name="Fraser C.M."/>
        </authorList>
    </citation>
    <scope>NUCLEOTIDE SEQUENCE [LARGE SCALE GENOMIC DNA]</scope>
    <source>
        <strain>ATCC 35984 / DSM 28319 / BCRC 17069 / CCUG 31568 / BM 3577 / RP62A</strain>
    </source>
</reference>
<dbReference type="EC" id="6.3.2.4" evidence="2"/>
<dbReference type="EMBL" id="CP000029">
    <property type="protein sequence ID" value="AAW55060.1"/>
    <property type="molecule type" value="Genomic_DNA"/>
</dbReference>
<dbReference type="RefSeq" id="WP_001832735.1">
    <property type="nucleotide sequence ID" value="NC_002976.3"/>
</dbReference>
<dbReference type="SMR" id="Q5HMD8"/>
<dbReference type="STRING" id="176279.SERP1690"/>
<dbReference type="KEGG" id="ser:SERP1690"/>
<dbReference type="eggNOG" id="COG1181">
    <property type="taxonomic scope" value="Bacteria"/>
</dbReference>
<dbReference type="HOGENOM" id="CLU_039268_0_0_9"/>
<dbReference type="UniPathway" id="UPA00219"/>
<dbReference type="Proteomes" id="UP000000531">
    <property type="component" value="Chromosome"/>
</dbReference>
<dbReference type="GO" id="GO:0005829">
    <property type="term" value="C:cytosol"/>
    <property type="evidence" value="ECO:0007669"/>
    <property type="project" value="TreeGrafter"/>
</dbReference>
<dbReference type="GO" id="GO:0005524">
    <property type="term" value="F:ATP binding"/>
    <property type="evidence" value="ECO:0007669"/>
    <property type="project" value="UniProtKB-KW"/>
</dbReference>
<dbReference type="GO" id="GO:0008716">
    <property type="term" value="F:D-alanine-D-alanine ligase activity"/>
    <property type="evidence" value="ECO:0007669"/>
    <property type="project" value="UniProtKB-UniRule"/>
</dbReference>
<dbReference type="GO" id="GO:0046872">
    <property type="term" value="F:metal ion binding"/>
    <property type="evidence" value="ECO:0007669"/>
    <property type="project" value="UniProtKB-KW"/>
</dbReference>
<dbReference type="GO" id="GO:0071555">
    <property type="term" value="P:cell wall organization"/>
    <property type="evidence" value="ECO:0007669"/>
    <property type="project" value="UniProtKB-KW"/>
</dbReference>
<dbReference type="GO" id="GO:0009252">
    <property type="term" value="P:peptidoglycan biosynthetic process"/>
    <property type="evidence" value="ECO:0007669"/>
    <property type="project" value="UniProtKB-UniRule"/>
</dbReference>
<dbReference type="GO" id="GO:0008360">
    <property type="term" value="P:regulation of cell shape"/>
    <property type="evidence" value="ECO:0007669"/>
    <property type="project" value="UniProtKB-KW"/>
</dbReference>
<dbReference type="FunFam" id="3.30.1490.20:FF:000007">
    <property type="entry name" value="D-alanine--D-alanine ligase"/>
    <property type="match status" value="1"/>
</dbReference>
<dbReference type="FunFam" id="3.30.470.20:FF:000008">
    <property type="entry name" value="D-alanine--D-alanine ligase"/>
    <property type="match status" value="1"/>
</dbReference>
<dbReference type="Gene3D" id="3.40.50.20">
    <property type="match status" value="1"/>
</dbReference>
<dbReference type="Gene3D" id="3.30.1490.20">
    <property type="entry name" value="ATP-grasp fold, A domain"/>
    <property type="match status" value="1"/>
</dbReference>
<dbReference type="Gene3D" id="3.30.470.20">
    <property type="entry name" value="ATP-grasp fold, B domain"/>
    <property type="match status" value="1"/>
</dbReference>
<dbReference type="HAMAP" id="MF_00047">
    <property type="entry name" value="Dala_Dala_lig"/>
    <property type="match status" value="1"/>
</dbReference>
<dbReference type="InterPro" id="IPR011761">
    <property type="entry name" value="ATP-grasp"/>
</dbReference>
<dbReference type="InterPro" id="IPR013815">
    <property type="entry name" value="ATP_grasp_subdomain_1"/>
</dbReference>
<dbReference type="InterPro" id="IPR000291">
    <property type="entry name" value="D-Ala_lig_Van_CS"/>
</dbReference>
<dbReference type="InterPro" id="IPR005905">
    <property type="entry name" value="D_ala_D_ala"/>
</dbReference>
<dbReference type="InterPro" id="IPR011095">
    <property type="entry name" value="Dala_Dala_lig_C"/>
</dbReference>
<dbReference type="InterPro" id="IPR011127">
    <property type="entry name" value="Dala_Dala_lig_N"/>
</dbReference>
<dbReference type="InterPro" id="IPR016185">
    <property type="entry name" value="PreATP-grasp_dom_sf"/>
</dbReference>
<dbReference type="NCBIfam" id="TIGR01205">
    <property type="entry name" value="D_ala_D_alaTIGR"/>
    <property type="match status" value="1"/>
</dbReference>
<dbReference type="NCBIfam" id="NF002526">
    <property type="entry name" value="PRK01966.1-2"/>
    <property type="match status" value="1"/>
</dbReference>
<dbReference type="NCBIfam" id="NF002528">
    <property type="entry name" value="PRK01966.1-4"/>
    <property type="match status" value="1"/>
</dbReference>
<dbReference type="PANTHER" id="PTHR23132">
    <property type="entry name" value="D-ALANINE--D-ALANINE LIGASE"/>
    <property type="match status" value="1"/>
</dbReference>
<dbReference type="PANTHER" id="PTHR23132:SF25">
    <property type="entry name" value="D-ALANINE--D-ALANINE LIGASE A"/>
    <property type="match status" value="1"/>
</dbReference>
<dbReference type="Pfam" id="PF07478">
    <property type="entry name" value="Dala_Dala_lig_C"/>
    <property type="match status" value="1"/>
</dbReference>
<dbReference type="Pfam" id="PF01820">
    <property type="entry name" value="Dala_Dala_lig_N"/>
    <property type="match status" value="1"/>
</dbReference>
<dbReference type="PIRSF" id="PIRSF039102">
    <property type="entry name" value="Ddl/VanB"/>
    <property type="match status" value="1"/>
</dbReference>
<dbReference type="SUPFAM" id="SSF56059">
    <property type="entry name" value="Glutathione synthetase ATP-binding domain-like"/>
    <property type="match status" value="1"/>
</dbReference>
<dbReference type="SUPFAM" id="SSF52440">
    <property type="entry name" value="PreATP-grasp domain"/>
    <property type="match status" value="1"/>
</dbReference>
<dbReference type="PROSITE" id="PS50975">
    <property type="entry name" value="ATP_GRASP"/>
    <property type="match status" value="1"/>
</dbReference>
<dbReference type="PROSITE" id="PS00843">
    <property type="entry name" value="DALA_DALA_LIGASE_1"/>
    <property type="match status" value="1"/>
</dbReference>
<dbReference type="PROSITE" id="PS00844">
    <property type="entry name" value="DALA_DALA_LIGASE_2"/>
    <property type="match status" value="1"/>
</dbReference>
<name>DDL_STAEQ</name>
<feature type="chain" id="PRO_0000177881" description="D-alanine--D-alanine ligase">
    <location>
        <begin position="1"/>
        <end position="357"/>
    </location>
</feature>
<feature type="domain" description="ATP-grasp" evidence="2">
    <location>
        <begin position="134"/>
        <end position="339"/>
    </location>
</feature>
<feature type="binding site" evidence="2">
    <location>
        <begin position="167"/>
        <end position="222"/>
    </location>
    <ligand>
        <name>ATP</name>
        <dbReference type="ChEBI" id="CHEBI:30616"/>
    </ligand>
</feature>
<feature type="binding site" evidence="2">
    <location>
        <position position="293"/>
    </location>
    <ligand>
        <name>Mg(2+)</name>
        <dbReference type="ChEBI" id="CHEBI:18420"/>
        <label>1</label>
    </ligand>
</feature>
<feature type="binding site" evidence="2">
    <location>
        <position position="306"/>
    </location>
    <ligand>
        <name>Mg(2+)</name>
        <dbReference type="ChEBI" id="CHEBI:18420"/>
        <label>1</label>
    </ligand>
</feature>
<feature type="binding site" evidence="2">
    <location>
        <position position="306"/>
    </location>
    <ligand>
        <name>Mg(2+)</name>
        <dbReference type="ChEBI" id="CHEBI:18420"/>
        <label>2</label>
    </ligand>
</feature>
<feature type="binding site" evidence="2">
    <location>
        <position position="308"/>
    </location>
    <ligand>
        <name>Mg(2+)</name>
        <dbReference type="ChEBI" id="CHEBI:18420"/>
        <label>2</label>
    </ligand>
</feature>
<gene>
    <name evidence="2" type="primary">ddl</name>
    <name type="ordered locus">SERP1690</name>
</gene>
<protein>
    <recommendedName>
        <fullName evidence="2">D-alanine--D-alanine ligase</fullName>
        <ecNumber evidence="2">6.3.2.4</ecNumber>
    </recommendedName>
    <alternativeName>
        <fullName evidence="2">D-Ala-D-Ala ligase</fullName>
    </alternativeName>
    <alternativeName>
        <fullName evidence="2">D-alanylalanine synthetase</fullName>
    </alternativeName>
</protein>
<keyword id="KW-0067">ATP-binding</keyword>
<keyword id="KW-0133">Cell shape</keyword>
<keyword id="KW-0961">Cell wall biogenesis/degradation</keyword>
<keyword id="KW-0963">Cytoplasm</keyword>
<keyword id="KW-0436">Ligase</keyword>
<keyword id="KW-0460">Magnesium</keyword>
<keyword id="KW-0464">Manganese</keyword>
<keyword id="KW-0479">Metal-binding</keyword>
<keyword id="KW-0547">Nucleotide-binding</keyword>
<keyword id="KW-0573">Peptidoglycan synthesis</keyword>
<keyword id="KW-1185">Reference proteome</keyword>
<organism>
    <name type="scientific">Staphylococcus epidermidis (strain ATCC 35984 / DSM 28319 / BCRC 17069 / CCUG 31568 / BM 3577 / RP62A)</name>
    <dbReference type="NCBI Taxonomy" id="176279"/>
    <lineage>
        <taxon>Bacteria</taxon>
        <taxon>Bacillati</taxon>
        <taxon>Bacillota</taxon>
        <taxon>Bacilli</taxon>
        <taxon>Bacillales</taxon>
        <taxon>Staphylococcaceae</taxon>
        <taxon>Staphylococcus</taxon>
    </lineage>
</organism>
<accession>Q5HMD8</accession>